<gene>
    <name type="primary">LTP1</name>
</gene>
<proteinExistence type="inferred from homology"/>
<reference key="1">
    <citation type="journal article" date="1994" name="Gene">
        <title>A pair of genes coding for lipid-transfer proteins in Sorghum vulgare.</title>
        <authorList>
            <person name="Pelese-Siebenbourg F."/>
            <person name="Caelles C."/>
            <person name="Kader J.-C."/>
            <person name="Delseny M."/>
            <person name="Puigdomenech P."/>
        </authorList>
    </citation>
    <scope>NUCLEOTIDE SEQUENCE [GENOMIC DNA / MRNA]</scope>
</reference>
<keyword id="KW-1015">Disulfide bond</keyword>
<keyword id="KW-0446">Lipid-binding</keyword>
<keyword id="KW-0732">Signal</keyword>
<keyword id="KW-0813">Transport</keyword>
<accession>Q43193</accession>
<accession>Q43195</accession>
<comment type="function">
    <text>Plant non-specific lipid-transfer proteins transfer phospholipids as well as galactolipids across membranes. May play a role in wax or cutin deposition in the cell walls of expanding epidermal cells and certain secretory tissues.</text>
</comment>
<comment type="similarity">
    <text evidence="2">Belongs to the plant LTP family.</text>
</comment>
<feature type="signal peptide" evidence="1">
    <location>
        <begin position="1"/>
        <end position="20"/>
    </location>
</feature>
<feature type="chain" id="PRO_0000018407" description="Non-specific lipid-transfer protein 1">
    <location>
        <begin position="21"/>
        <end position="118"/>
    </location>
</feature>
<feature type="disulfide bond" evidence="1">
    <location>
        <begin position="29"/>
        <end position="77"/>
    </location>
</feature>
<feature type="disulfide bond" evidence="1">
    <location>
        <begin position="39"/>
        <end position="54"/>
    </location>
</feature>
<feature type="disulfide bond" evidence="1">
    <location>
        <begin position="55"/>
        <end position="100"/>
    </location>
</feature>
<feature type="disulfide bond" evidence="1">
    <location>
        <begin position="75"/>
        <end position="114"/>
    </location>
</feature>
<feature type="sequence variant">
    <original>L</original>
    <variation>P</variation>
    <location>
        <position position="38"/>
    </location>
</feature>
<feature type="sequence variant">
    <original>F</original>
    <variation>S</variation>
    <location>
        <position position="48"/>
    </location>
</feature>
<feature type="sequence variant">
    <original>RR</original>
    <variation>A</variation>
    <location>
        <begin position="71"/>
        <end position="72"/>
    </location>
</feature>
<feature type="sequence variant">
    <original>S</original>
    <variation>N</variation>
    <location>
        <position position="118"/>
    </location>
</feature>
<dbReference type="EMBL" id="X71667">
    <property type="protein sequence ID" value="CAA50660.1"/>
    <property type="molecule type" value="Genomic_DNA"/>
</dbReference>
<dbReference type="EMBL" id="X71669">
    <property type="protein sequence ID" value="CAA50662.1"/>
    <property type="molecule type" value="mRNA"/>
</dbReference>
<dbReference type="PIR" id="S33459">
    <property type="entry name" value="S33459"/>
</dbReference>
<dbReference type="SMR" id="Q43193"/>
<dbReference type="eggNOG" id="ENOG502S4CI">
    <property type="taxonomic scope" value="Eukaryota"/>
</dbReference>
<dbReference type="ExpressionAtlas" id="Q43193">
    <property type="expression patterns" value="baseline and differential"/>
</dbReference>
<dbReference type="GO" id="GO:0008289">
    <property type="term" value="F:lipid binding"/>
    <property type="evidence" value="ECO:0007669"/>
    <property type="project" value="UniProtKB-KW"/>
</dbReference>
<dbReference type="GO" id="GO:0006869">
    <property type="term" value="P:lipid transport"/>
    <property type="evidence" value="ECO:0007669"/>
    <property type="project" value="InterPro"/>
</dbReference>
<dbReference type="CDD" id="cd01960">
    <property type="entry name" value="nsLTP1"/>
    <property type="match status" value="1"/>
</dbReference>
<dbReference type="Gene3D" id="1.10.110.10">
    <property type="entry name" value="Plant lipid-transfer and hydrophobic proteins"/>
    <property type="match status" value="1"/>
</dbReference>
<dbReference type="InterPro" id="IPR036312">
    <property type="entry name" value="Bifun_inhib/LTP/seed_sf"/>
</dbReference>
<dbReference type="InterPro" id="IPR016140">
    <property type="entry name" value="Bifunc_inhib/LTP/seed_store"/>
</dbReference>
<dbReference type="InterPro" id="IPR000528">
    <property type="entry name" value="Plant_nsLTP"/>
</dbReference>
<dbReference type="PANTHER" id="PTHR33076">
    <property type="entry name" value="NON-SPECIFIC LIPID-TRANSFER PROTEIN 2-RELATED"/>
    <property type="match status" value="1"/>
</dbReference>
<dbReference type="Pfam" id="PF00234">
    <property type="entry name" value="Tryp_alpha_amyl"/>
    <property type="match status" value="1"/>
</dbReference>
<dbReference type="PRINTS" id="PR00382">
    <property type="entry name" value="LIPIDTRNSFER"/>
</dbReference>
<dbReference type="SMART" id="SM00499">
    <property type="entry name" value="AAI"/>
    <property type="match status" value="1"/>
</dbReference>
<dbReference type="SUPFAM" id="SSF47699">
    <property type="entry name" value="Bifunctional inhibitor/lipid-transfer protein/seed storage 2S albumin"/>
    <property type="match status" value="1"/>
</dbReference>
<dbReference type="PROSITE" id="PS00597">
    <property type="entry name" value="PLANT_LTP"/>
    <property type="match status" value="1"/>
</dbReference>
<sequence length="118" mass="11570">MARLAVAIAVVAAVVVVLAATTSEAAISCGQVSSAIALCLSYARGQGFAPSAGCCSGVRSLNSAARTTADRRAACNCLKNAARGISGLNAGNAASIPSKCGVSVPYTISTSTDCSRVS</sequence>
<protein>
    <recommendedName>
        <fullName>Non-specific lipid-transfer protein 1</fullName>
        <shortName>LTP 1</shortName>
    </recommendedName>
</protein>
<organism>
    <name type="scientific">Sorghum bicolor</name>
    <name type="common">Sorghum</name>
    <name type="synonym">Sorghum vulgare</name>
    <dbReference type="NCBI Taxonomy" id="4558"/>
    <lineage>
        <taxon>Eukaryota</taxon>
        <taxon>Viridiplantae</taxon>
        <taxon>Streptophyta</taxon>
        <taxon>Embryophyta</taxon>
        <taxon>Tracheophyta</taxon>
        <taxon>Spermatophyta</taxon>
        <taxon>Magnoliopsida</taxon>
        <taxon>Liliopsida</taxon>
        <taxon>Poales</taxon>
        <taxon>Poaceae</taxon>
        <taxon>PACMAD clade</taxon>
        <taxon>Panicoideae</taxon>
        <taxon>Andropogonodae</taxon>
        <taxon>Andropogoneae</taxon>
        <taxon>Sorghinae</taxon>
        <taxon>Sorghum</taxon>
    </lineage>
</organism>
<evidence type="ECO:0000255" key="1"/>
<evidence type="ECO:0000305" key="2"/>
<name>NLTP1_SORBI</name>